<protein>
    <recommendedName>
        <fullName>2-hydroxyacid dehydrogenase homolog 1</fullName>
        <ecNumber>1.1.1.-</ecNumber>
    </recommendedName>
</protein>
<feature type="chain" id="PRO_0000316030" description="2-hydroxyacid dehydrogenase homolog 1">
    <location>
        <begin position="1"/>
        <end position="332"/>
    </location>
</feature>
<feature type="active site" evidence="1">
    <location>
        <position position="235"/>
    </location>
</feature>
<feature type="active site" evidence="1">
    <location>
        <position position="264"/>
    </location>
</feature>
<feature type="active site" description="Proton donor" evidence="1">
    <location>
        <position position="296"/>
    </location>
</feature>
<feature type="binding site" evidence="1">
    <location>
        <begin position="154"/>
        <end position="155"/>
    </location>
    <ligand>
        <name>NAD(+)</name>
        <dbReference type="ChEBI" id="CHEBI:57540"/>
    </ligand>
</feature>
<feature type="binding site" evidence="1">
    <location>
        <begin position="233"/>
        <end position="235"/>
    </location>
    <ligand>
        <name>NAD(+)</name>
        <dbReference type="ChEBI" id="CHEBI:57540"/>
    </ligand>
</feature>
<feature type="binding site" evidence="1">
    <location>
        <position position="259"/>
    </location>
    <ligand>
        <name>NAD(+)</name>
        <dbReference type="ChEBI" id="CHEBI:57540"/>
    </ligand>
</feature>
<feature type="binding site" evidence="1">
    <location>
        <begin position="296"/>
        <end position="299"/>
    </location>
    <ligand>
        <name>NAD(+)</name>
        <dbReference type="ChEBI" id="CHEBI:57540"/>
    </ligand>
</feature>
<name>DDH1_SCHPO</name>
<accession>Q9P7P8</accession>
<keyword id="KW-0963">Cytoplasm</keyword>
<keyword id="KW-0520">NAD</keyword>
<keyword id="KW-0539">Nucleus</keyword>
<keyword id="KW-0560">Oxidoreductase</keyword>
<keyword id="KW-1185">Reference proteome</keyword>
<reference key="1">
    <citation type="journal article" date="2002" name="Nature">
        <title>The genome sequence of Schizosaccharomyces pombe.</title>
        <authorList>
            <person name="Wood V."/>
            <person name="Gwilliam R."/>
            <person name="Rajandream M.A."/>
            <person name="Lyne M.H."/>
            <person name="Lyne R."/>
            <person name="Stewart A."/>
            <person name="Sgouros J.G."/>
            <person name="Peat N."/>
            <person name="Hayles J."/>
            <person name="Baker S.G."/>
            <person name="Basham D."/>
            <person name="Bowman S."/>
            <person name="Brooks K."/>
            <person name="Brown D."/>
            <person name="Brown S."/>
            <person name="Chillingworth T."/>
            <person name="Churcher C.M."/>
            <person name="Collins M."/>
            <person name="Connor R."/>
            <person name="Cronin A."/>
            <person name="Davis P."/>
            <person name="Feltwell T."/>
            <person name="Fraser A."/>
            <person name="Gentles S."/>
            <person name="Goble A."/>
            <person name="Hamlin N."/>
            <person name="Harris D.E."/>
            <person name="Hidalgo J."/>
            <person name="Hodgson G."/>
            <person name="Holroyd S."/>
            <person name="Hornsby T."/>
            <person name="Howarth S."/>
            <person name="Huckle E.J."/>
            <person name="Hunt S."/>
            <person name="Jagels K."/>
            <person name="James K.D."/>
            <person name="Jones L."/>
            <person name="Jones M."/>
            <person name="Leather S."/>
            <person name="McDonald S."/>
            <person name="McLean J."/>
            <person name="Mooney P."/>
            <person name="Moule S."/>
            <person name="Mungall K.L."/>
            <person name="Murphy L.D."/>
            <person name="Niblett D."/>
            <person name="Odell C."/>
            <person name="Oliver K."/>
            <person name="O'Neil S."/>
            <person name="Pearson D."/>
            <person name="Quail M.A."/>
            <person name="Rabbinowitsch E."/>
            <person name="Rutherford K.M."/>
            <person name="Rutter S."/>
            <person name="Saunders D."/>
            <person name="Seeger K."/>
            <person name="Sharp S."/>
            <person name="Skelton J."/>
            <person name="Simmonds M.N."/>
            <person name="Squares R."/>
            <person name="Squares S."/>
            <person name="Stevens K."/>
            <person name="Taylor K."/>
            <person name="Taylor R.G."/>
            <person name="Tivey A."/>
            <person name="Walsh S.V."/>
            <person name="Warren T."/>
            <person name="Whitehead S."/>
            <person name="Woodward J.R."/>
            <person name="Volckaert G."/>
            <person name="Aert R."/>
            <person name="Robben J."/>
            <person name="Grymonprez B."/>
            <person name="Weltjens I."/>
            <person name="Vanstreels E."/>
            <person name="Rieger M."/>
            <person name="Schaefer M."/>
            <person name="Mueller-Auer S."/>
            <person name="Gabel C."/>
            <person name="Fuchs M."/>
            <person name="Duesterhoeft A."/>
            <person name="Fritzc C."/>
            <person name="Holzer E."/>
            <person name="Moestl D."/>
            <person name="Hilbert H."/>
            <person name="Borzym K."/>
            <person name="Langer I."/>
            <person name="Beck A."/>
            <person name="Lehrach H."/>
            <person name="Reinhardt R."/>
            <person name="Pohl T.M."/>
            <person name="Eger P."/>
            <person name="Zimmermann W."/>
            <person name="Wedler H."/>
            <person name="Wambutt R."/>
            <person name="Purnelle B."/>
            <person name="Goffeau A."/>
            <person name="Cadieu E."/>
            <person name="Dreano S."/>
            <person name="Gloux S."/>
            <person name="Lelaure V."/>
            <person name="Mottier S."/>
            <person name="Galibert F."/>
            <person name="Aves S.J."/>
            <person name="Xiang Z."/>
            <person name="Hunt C."/>
            <person name="Moore K."/>
            <person name="Hurst S.M."/>
            <person name="Lucas M."/>
            <person name="Rochet M."/>
            <person name="Gaillardin C."/>
            <person name="Tallada V.A."/>
            <person name="Garzon A."/>
            <person name="Thode G."/>
            <person name="Daga R.R."/>
            <person name="Cruzado L."/>
            <person name="Jimenez J."/>
            <person name="Sanchez M."/>
            <person name="del Rey F."/>
            <person name="Benito J."/>
            <person name="Dominguez A."/>
            <person name="Revuelta J.L."/>
            <person name="Moreno S."/>
            <person name="Armstrong J."/>
            <person name="Forsburg S.L."/>
            <person name="Cerutti L."/>
            <person name="Lowe T."/>
            <person name="McCombie W.R."/>
            <person name="Paulsen I."/>
            <person name="Potashkin J."/>
            <person name="Shpakovski G.V."/>
            <person name="Ussery D."/>
            <person name="Barrell B.G."/>
            <person name="Nurse P."/>
        </authorList>
    </citation>
    <scope>NUCLEOTIDE SEQUENCE [LARGE SCALE GENOMIC DNA]</scope>
    <source>
        <strain>972 / ATCC 24843</strain>
    </source>
</reference>
<gene>
    <name type="ORF">SPAC186.07c</name>
</gene>
<dbReference type="EC" id="1.1.1.-"/>
<dbReference type="EMBL" id="CU329670">
    <property type="protein sequence ID" value="CAB75871.1"/>
    <property type="molecule type" value="Genomic_DNA"/>
</dbReference>
<dbReference type="PIR" id="T50134">
    <property type="entry name" value="T50134"/>
</dbReference>
<dbReference type="RefSeq" id="NP_595025.1">
    <property type="nucleotide sequence ID" value="NM_001020455.1"/>
</dbReference>
<dbReference type="SMR" id="Q9P7P8"/>
<dbReference type="FunCoup" id="Q9P7P8">
    <property type="interactions" value="27"/>
</dbReference>
<dbReference type="STRING" id="284812.Q9P7P8"/>
<dbReference type="PaxDb" id="4896-SPAC186.07c.1"/>
<dbReference type="EnsemblFungi" id="SPAC186.07c.1">
    <property type="protein sequence ID" value="SPAC186.07c.1:pep"/>
    <property type="gene ID" value="SPAC186.07c"/>
</dbReference>
<dbReference type="KEGG" id="spo:2542600"/>
<dbReference type="PomBase" id="SPAC186.07c"/>
<dbReference type="VEuPathDB" id="FungiDB:SPAC186.07c"/>
<dbReference type="eggNOG" id="KOG0068">
    <property type="taxonomic scope" value="Eukaryota"/>
</dbReference>
<dbReference type="HOGENOM" id="CLU_019796_1_1_1"/>
<dbReference type="InParanoid" id="Q9P7P8"/>
<dbReference type="OMA" id="GIFYADC"/>
<dbReference type="PhylomeDB" id="Q9P7P8"/>
<dbReference type="PRO" id="PR:Q9P7P8"/>
<dbReference type="Proteomes" id="UP000002485">
    <property type="component" value="Chromosome I"/>
</dbReference>
<dbReference type="GO" id="GO:0005829">
    <property type="term" value="C:cytosol"/>
    <property type="evidence" value="ECO:0007005"/>
    <property type="project" value="PomBase"/>
</dbReference>
<dbReference type="GO" id="GO:0005634">
    <property type="term" value="C:nucleus"/>
    <property type="evidence" value="ECO:0007005"/>
    <property type="project" value="PomBase"/>
</dbReference>
<dbReference type="GO" id="GO:0051287">
    <property type="term" value="F:NAD binding"/>
    <property type="evidence" value="ECO:0007669"/>
    <property type="project" value="InterPro"/>
</dbReference>
<dbReference type="GO" id="GO:0016616">
    <property type="term" value="F:oxidoreductase activity, acting on the CH-OH group of donors, NAD or NADP as acceptor"/>
    <property type="evidence" value="ECO:0007669"/>
    <property type="project" value="InterPro"/>
</dbReference>
<dbReference type="CDD" id="cd12183">
    <property type="entry name" value="LDH_like_2"/>
    <property type="match status" value="1"/>
</dbReference>
<dbReference type="FunFam" id="3.40.50.720:FF:000052">
    <property type="entry name" value="D-lactate dehydrogenase"/>
    <property type="match status" value="1"/>
</dbReference>
<dbReference type="Gene3D" id="3.40.50.720">
    <property type="entry name" value="NAD(P)-binding Rossmann-like Domain"/>
    <property type="match status" value="2"/>
</dbReference>
<dbReference type="InterPro" id="IPR006139">
    <property type="entry name" value="D-isomer_2_OHA_DH_cat_dom"/>
</dbReference>
<dbReference type="InterPro" id="IPR029753">
    <property type="entry name" value="D-isomer_DH_CS"/>
</dbReference>
<dbReference type="InterPro" id="IPR006140">
    <property type="entry name" value="D-isomer_DH_NAD-bd"/>
</dbReference>
<dbReference type="InterPro" id="IPR036291">
    <property type="entry name" value="NAD(P)-bd_dom_sf"/>
</dbReference>
<dbReference type="PANTHER" id="PTHR43026">
    <property type="entry name" value="2-HYDROXYACID DEHYDROGENASE HOMOLOG 1-RELATED"/>
    <property type="match status" value="1"/>
</dbReference>
<dbReference type="PANTHER" id="PTHR43026:SF1">
    <property type="entry name" value="2-HYDROXYACID DEHYDROGENASE HOMOLOG 1-RELATED"/>
    <property type="match status" value="1"/>
</dbReference>
<dbReference type="Pfam" id="PF00389">
    <property type="entry name" value="2-Hacid_dh"/>
    <property type="match status" value="1"/>
</dbReference>
<dbReference type="Pfam" id="PF02826">
    <property type="entry name" value="2-Hacid_dh_C"/>
    <property type="match status" value="1"/>
</dbReference>
<dbReference type="SUPFAM" id="SSF52283">
    <property type="entry name" value="Formate/glycerate dehydrogenase catalytic domain-like"/>
    <property type="match status" value="1"/>
</dbReference>
<dbReference type="SUPFAM" id="SSF51735">
    <property type="entry name" value="NAD(P)-binding Rossmann-fold domains"/>
    <property type="match status" value="1"/>
</dbReference>
<dbReference type="PROSITE" id="PS00670">
    <property type="entry name" value="D_2_HYDROXYACID_DH_2"/>
    <property type="match status" value="1"/>
</dbReference>
<proteinExistence type="inferred from homology"/>
<sequence>MRIAFFSAQPYEKEPFEKVNENYKHEIDYHESILNKKTAVLAEKAPVVCVFVNDKVDADTLKVLAKNGTKLIALRCAGFNNVDLKAAADNGITVVRVPAYSPYAVAEYTIGLLLSLNRKIHRAYVRVREDDFNLNGLLGHDLHGKTIGLLGTGRIGGLVAKCLKLGFGCEVLAHDIKPNKELEKFGIQFVEQQEVLAKADFLCLHCPLTPDTEHLVDEKLLASMKKGVKIINTSRGGLVDTKALVKAIESGQVGGCAMDVYEGERRLFYRDLSNEVIKDTTFQQLANFPNVLVTSHQAFFTAEALSAIAHTTLKNVSDFASQNNDPSVIVKN</sequence>
<comment type="subcellular location">
    <subcellularLocation>
        <location>Cytoplasm</location>
    </subcellularLocation>
    <subcellularLocation>
        <location>Nucleus</location>
    </subcellularLocation>
</comment>
<comment type="similarity">
    <text evidence="2">Belongs to the D-isomer specific 2-hydroxyacid dehydrogenase family.</text>
</comment>
<organism>
    <name type="scientific">Schizosaccharomyces pombe (strain 972 / ATCC 24843)</name>
    <name type="common">Fission yeast</name>
    <dbReference type="NCBI Taxonomy" id="284812"/>
    <lineage>
        <taxon>Eukaryota</taxon>
        <taxon>Fungi</taxon>
        <taxon>Dikarya</taxon>
        <taxon>Ascomycota</taxon>
        <taxon>Taphrinomycotina</taxon>
        <taxon>Schizosaccharomycetes</taxon>
        <taxon>Schizosaccharomycetales</taxon>
        <taxon>Schizosaccharomycetaceae</taxon>
        <taxon>Schizosaccharomyces</taxon>
    </lineage>
</organism>
<evidence type="ECO:0000250" key="1"/>
<evidence type="ECO:0000305" key="2"/>